<accession>P86408</accession>
<accession>E4VP24</accession>
<accession>E7CZY7</accession>
<protein>
    <recommendedName>
        <fullName evidence="6 7">Sodium channel neurotoxin MeuNaTxalpha-1</fullName>
    </recommendedName>
</protein>
<name>SCXN1_MESEU</name>
<dbReference type="EMBL" id="EF445066">
    <property type="protein sequence ID" value="ABR21041.1"/>
    <property type="molecule type" value="Genomic_DNA"/>
</dbReference>
<dbReference type="EMBL" id="HM989910">
    <property type="protein sequence ID" value="ADT82850.1"/>
    <property type="molecule type" value="mRNA"/>
</dbReference>
<dbReference type="PDB" id="6THI">
    <property type="method" value="NMR"/>
    <property type="chains" value="A=20-83"/>
</dbReference>
<dbReference type="PDBsum" id="6THI"/>
<dbReference type="SMR" id="P86408"/>
<dbReference type="GO" id="GO:0005576">
    <property type="term" value="C:extracellular region"/>
    <property type="evidence" value="ECO:0000314"/>
    <property type="project" value="UniProtKB"/>
</dbReference>
<dbReference type="GO" id="GO:0019871">
    <property type="term" value="F:sodium channel inhibitor activity"/>
    <property type="evidence" value="ECO:0000314"/>
    <property type="project" value="UniProtKB"/>
</dbReference>
<dbReference type="GO" id="GO:0090729">
    <property type="term" value="F:toxin activity"/>
    <property type="evidence" value="ECO:0007669"/>
    <property type="project" value="UniProtKB-KW"/>
</dbReference>
<dbReference type="GO" id="GO:0006952">
    <property type="term" value="P:defense response"/>
    <property type="evidence" value="ECO:0007669"/>
    <property type="project" value="InterPro"/>
</dbReference>
<dbReference type="CDD" id="cd23106">
    <property type="entry name" value="neurotoxins_LC_scorpion"/>
    <property type="match status" value="1"/>
</dbReference>
<dbReference type="FunFam" id="3.30.30.10:FF:000002">
    <property type="entry name" value="Alpha-like toxin BmK-M1"/>
    <property type="match status" value="1"/>
</dbReference>
<dbReference type="Gene3D" id="3.30.30.10">
    <property type="entry name" value="Knottin, scorpion toxin-like"/>
    <property type="match status" value="1"/>
</dbReference>
<dbReference type="InterPro" id="IPR044062">
    <property type="entry name" value="LCN-type_CS_alpha_beta_dom"/>
</dbReference>
<dbReference type="InterPro" id="IPR003614">
    <property type="entry name" value="Scorpion_toxin-like"/>
</dbReference>
<dbReference type="InterPro" id="IPR036574">
    <property type="entry name" value="Scorpion_toxin-like_sf"/>
</dbReference>
<dbReference type="InterPro" id="IPR018218">
    <property type="entry name" value="Scorpion_toxinL"/>
</dbReference>
<dbReference type="InterPro" id="IPR002061">
    <property type="entry name" value="Scorpion_toxinL/defensin"/>
</dbReference>
<dbReference type="Pfam" id="PF00537">
    <property type="entry name" value="Toxin_3"/>
    <property type="match status" value="1"/>
</dbReference>
<dbReference type="PRINTS" id="PR00285">
    <property type="entry name" value="SCORPNTOXIN"/>
</dbReference>
<dbReference type="PRINTS" id="PR00284">
    <property type="entry name" value="TOXIN"/>
</dbReference>
<dbReference type="SMART" id="SM00505">
    <property type="entry name" value="Knot1"/>
    <property type="match status" value="1"/>
</dbReference>
<dbReference type="SUPFAM" id="SSF57095">
    <property type="entry name" value="Scorpion toxin-like"/>
    <property type="match status" value="1"/>
</dbReference>
<dbReference type="PROSITE" id="PS51863">
    <property type="entry name" value="LCN_CSAB"/>
    <property type="match status" value="1"/>
</dbReference>
<feature type="signal peptide" evidence="2 3 5">
    <location>
        <begin position="1"/>
        <end position="19"/>
    </location>
</feature>
<feature type="chain" id="PRO_0000401119" description="Sodium channel neurotoxin MeuNaTxalpha-1" evidence="5">
    <location>
        <begin position="20"/>
        <end position="83"/>
    </location>
</feature>
<feature type="domain" description="LCN-type CS-alpha/beta" evidence="1">
    <location>
        <begin position="21"/>
        <end position="83"/>
    </location>
</feature>
<feature type="region of interest" description="Specificity module, loop 1" evidence="10">
    <location>
        <begin position="27"/>
        <end position="31"/>
    </location>
</feature>
<feature type="region of interest" description="Specificity module, loop 2" evidence="10">
    <location>
        <begin position="58"/>
        <end position="62"/>
    </location>
</feature>
<feature type="region of interest" description="Specificity module, loop 3" evidence="10">
    <location>
        <begin position="75"/>
        <end position="83"/>
    </location>
</feature>
<feature type="modified residue" description="Asparagine amide" evidence="2 5">
    <location>
        <position position="83"/>
    </location>
</feature>
<feature type="disulfide bond" evidence="4 11">
    <location>
        <begin position="31"/>
        <end position="82"/>
    </location>
</feature>
<feature type="disulfide bond" evidence="4">
    <location>
        <begin position="35"/>
        <end position="55"/>
    </location>
</feature>
<feature type="disulfide bond" evidence="4">
    <location>
        <begin position="41"/>
        <end position="65"/>
    </location>
</feature>
<feature type="disulfide bond" evidence="4 11">
    <location>
        <begin position="45"/>
        <end position="67"/>
    </location>
</feature>
<feature type="strand" evidence="12">
    <location>
        <begin position="21"/>
        <end position="26"/>
    </location>
</feature>
<feature type="helix" evidence="12">
    <location>
        <begin position="38"/>
        <end position="47"/>
    </location>
</feature>
<feature type="strand" evidence="12">
    <location>
        <begin position="51"/>
        <end position="56"/>
    </location>
</feature>
<feature type="strand" evidence="12">
    <location>
        <begin position="62"/>
        <end position="70"/>
    </location>
</feature>
<sequence>MNSLVMISLALLVMTGVESVRDGYIADDKNCAYFCGRNAYCDEECKKKGAESGYCQWAGQYGNACWCYKLPDKVPIKVSGKCNGR</sequence>
<reference key="1">
    <citation type="journal article" date="2012" name="Mol. Cell. Proteomics">
        <title>Evolutionary diversification of Mesobuthus alpha-scorpion toxins affecting sodium channels.</title>
        <authorList>
            <person name="Zhu S."/>
            <person name="Peigneur S."/>
            <person name="Gao B."/>
            <person name="Lu X."/>
            <person name="Cao C."/>
            <person name="Tytgat J."/>
        </authorList>
    </citation>
    <scope>NUCLEOTIDE SEQUENCE [GENOMIC DNA / MRNA]</scope>
    <scope>PROTEIN SEQUENCE OF 20-24</scope>
    <scope>FUNCTION</scope>
    <scope>SUBCELLULAR LOCATION</scope>
    <scope>MASS SPECTROMETRY</scope>
    <scope>AMIDATION AT ASN-83</scope>
    <source>
        <tissue>Venom</tissue>
        <tissue>Venom gland</tissue>
    </source>
</reference>
<reference key="2">
    <citation type="submission" date="2009-11" db="UniProtKB">
        <title>Characterization of an alpha-sodium neurotoxin from the scorpion Mesobuthus eupeus venom.</title>
        <authorList>
            <person name="Zhu S.Y."/>
            <person name="Gao B."/>
        </authorList>
    </citation>
    <scope>PROTEIN SEQUENCE OF 20-83</scope>
    <scope>FUNCTION</scope>
    <scope>SUBCELLULAR LOCATION</scope>
    <scope>MASS SPECTROMETRY</scope>
    <scope>AMIDATION AT ASN-83</scope>
    <source>
        <tissue>Venom</tissue>
    </source>
</reference>
<reference key="3">
    <citation type="journal article" date="2021" name="FEBS J.">
        <title>Scorpion toxin MeuNaTxalpha-1 sensitizes primary nociceptors by selective modulation of voltage-gated sodium channels.</title>
        <authorList>
            <person name="van Cann M."/>
            <person name="Kuzmenkov A."/>
            <person name="Isensee J."/>
            <person name="Andreev-Andrievskiy A."/>
            <person name="Peigneur S."/>
            <person name="Khusainov G."/>
            <person name="Berkut A."/>
            <person name="Tytgat J."/>
            <person name="Vassilevski A."/>
            <person name="Hucho T."/>
        </authorList>
    </citation>
    <scope>PROTEIN SEQUENCE OF 20-34</scope>
    <scope>FUNCTION</scope>
    <scope>RECOMBINANT EXPRESSION WITHOUT C-TERMINAL AMIDATION</scope>
    <scope>TOXIC DOSE</scope>
    <scope>BIOASSAY</scope>
</reference>
<reference key="4">
    <citation type="journal article" date="2021" name="Proteins">
        <title>Structure of MeuNaTxalpha-1 toxin from scorpion venom highlights the importance of the nest motif.</title>
        <authorList>
            <person name="Mineev K.S."/>
            <person name="Kuzmenkov A.I."/>
            <person name="Arseniev A.S."/>
            <person name="Vassilevski A.A."/>
        </authorList>
    </citation>
    <scope>STRUCTURE BY NMR OF 20-83</scope>
    <scope>DISULFIDE BONDS</scope>
    <scope>RECOMBINANT EXPRESSION WITHOUT C-TERMINAL AMIDATION</scope>
</reference>
<organism>
    <name type="scientific">Mesobuthus eupeus</name>
    <name type="common">Lesser Asian scorpion</name>
    <name type="synonym">Buthus eupeus</name>
    <dbReference type="NCBI Taxonomy" id="34648"/>
    <lineage>
        <taxon>Eukaryota</taxon>
        <taxon>Metazoa</taxon>
        <taxon>Ecdysozoa</taxon>
        <taxon>Arthropoda</taxon>
        <taxon>Chelicerata</taxon>
        <taxon>Arachnida</taxon>
        <taxon>Scorpiones</taxon>
        <taxon>Buthida</taxon>
        <taxon>Buthoidea</taxon>
        <taxon>Buthidae</taxon>
        <taxon>Mesobuthus</taxon>
    </lineage>
</organism>
<proteinExistence type="evidence at protein level"/>
<comment type="function">
    <text evidence="2 5">Alpha toxins bind voltage-independently at site-3 of sodium channels (Nav) and inhibit the inactivation of the activated channels, thereby blocking neuronal transmission. This toxin inhibits inactivation of Nav1.6/SCN8A (EC(50)=3.1 uM) and drosophila DmNav1 (EC(50)=1.17 uM) (PubMed:21969612, PubMed:33051988, Ref.2). It also shows a weak inhibition of inactivation on Nav1.2/SCN2A Nav1.3/SCN3A, and Nav1.7/SCN9A (PubMed:21969612, PubMed:33051988). The toxin (1 uM) does not significantly shift the midpoint of activation at the two channels, but induces a significant depolarizing shift in the V(1/2) of inactivation of the channels (PubMed:21969612). The toxin has also been shown to dose-dependently stimulates intracellular signaling in DRG neurons through activation of two kinases (type II protein kinase A (PKA-II) and MAP kinases 1/3 (MAPK1/MAPK3)) (PubMed:33051988). Nav1.2/SCN2A is strongly suggested to be the target channel predominantly involved in this activation (PubMed:33051988). In vivo, the toxin induces a dose-dependent thermal hyperalgesia lasting 30-45 minutes (PubMed:33051988).</text>
</comment>
<comment type="subcellular location">
    <subcellularLocation>
        <location evidence="2">Secreted</location>
    </subcellularLocation>
</comment>
<comment type="tissue specificity">
    <text evidence="9">Expressed by the venom gland.</text>
</comment>
<comment type="domain">
    <text evidence="8">Has the structural arrangement of an alpha-helix connected to antiparallel beta-sheets by disulfide bonds (CS-alpha/beta).</text>
</comment>
<comment type="domain">
    <text evidence="10">A labile and variable specificity module composed of 3 loops determines the selectivity of scorpion Nav alpha-toxins. In this toxin, the specificity module consists of: an N-terminal loop following beta-1 and up to the first cysteine residue (residues 27-31), the tip of the beta-2-beta-3 hairpin (58-62), and a C-terminal region (75-83).</text>
</comment>
<comment type="PTM">
    <text evidence="3">C-terminal amidation does not appear to play an important role in activity, since the non-amidated recombinant toxin and the native toxin (which is amidated) show similar activities on all sodium channels tested.</text>
</comment>
<comment type="mass spectrometry"/>
<comment type="mass spectrometry"/>
<comment type="toxic dose">
    <text evidence="3">LD(50) is 5.8 mg/kg by subcutaneous administration into mice.</text>
</comment>
<comment type="miscellaneous">
    <text evidence="2">Negative results: shows no effect on Nav1.4/SCN4A, Nav1.5/SCN5A and Nav1.8/SCN10A (PubMed:21969612, PubMed:33051988).</text>
</comment>
<comment type="similarity">
    <text evidence="8">Belongs to the long (4 C-C) scorpion toxin superfamily. Sodium channel inhibitor family. Alpha subfamily.</text>
</comment>
<keyword id="KW-0002">3D-structure</keyword>
<keyword id="KW-0027">Amidation</keyword>
<keyword id="KW-0903">Direct protein sequencing</keyword>
<keyword id="KW-1015">Disulfide bond</keyword>
<keyword id="KW-0872">Ion channel impairing toxin</keyword>
<keyword id="KW-0528">Neurotoxin</keyword>
<keyword id="KW-0964">Secreted</keyword>
<keyword id="KW-0732">Signal</keyword>
<keyword id="KW-0800">Toxin</keyword>
<keyword id="KW-0738">Voltage-gated sodium channel impairing toxin</keyword>
<evidence type="ECO:0000255" key="1">
    <source>
        <dbReference type="PROSITE-ProRule" id="PRU01210"/>
    </source>
</evidence>
<evidence type="ECO:0000269" key="2">
    <source>
    </source>
</evidence>
<evidence type="ECO:0000269" key="3">
    <source>
    </source>
</evidence>
<evidence type="ECO:0000269" key="4">
    <source>
    </source>
</evidence>
<evidence type="ECO:0000269" key="5">
    <source ref="2"/>
</evidence>
<evidence type="ECO:0000303" key="6">
    <source>
    </source>
</evidence>
<evidence type="ECO:0000303" key="7">
    <source ref="2"/>
</evidence>
<evidence type="ECO:0000305" key="8"/>
<evidence type="ECO:0000305" key="9">
    <source>
    </source>
</evidence>
<evidence type="ECO:0000305" key="10">
    <source>
    </source>
</evidence>
<evidence type="ECO:0007744" key="11">
    <source>
        <dbReference type="PDB" id="6THI"/>
    </source>
</evidence>
<evidence type="ECO:0007829" key="12">
    <source>
        <dbReference type="PDB" id="6THI"/>
    </source>
</evidence>